<comment type="function">
    <text evidence="1">Required for the export of heme to the periplasm for the biogenesis of c-type cytochromes.</text>
</comment>
<comment type="subcellular location">
    <subcellularLocation>
        <location evidence="3">Cell inner membrane</location>
        <topology evidence="3">Multi-pass membrane protein</topology>
    </subcellularLocation>
</comment>
<comment type="similarity">
    <text evidence="3">Belongs to the CcmB/CycW/HelB family.</text>
</comment>
<sequence length="221" mass="23644">MIFLEIIKRELQIAMRKNAEILNPLWFFLLVITLFPLVIGPDPKLLSRIAPGIAWVAALLSALLSFERLFRDDFIDGSLEQLMLTAQPLPMTALAKVVAHWLLTGLPLILLSPIAALLLSLEVNIWWALVLTLLLGTPVLSCIGAIGVALTVGLRKGGVLLSLLVVPLFIPVLIFASSVLEAAGLNVPYGGQLAILGAMMVGAVTLSPFAIAAALRISLDN</sequence>
<reference key="1">
    <citation type="journal article" date="1995" name="Science">
        <title>Whole-genome random sequencing and assembly of Haemophilus influenzae Rd.</title>
        <authorList>
            <person name="Fleischmann R.D."/>
            <person name="Adams M.D."/>
            <person name="White O."/>
            <person name="Clayton R.A."/>
            <person name="Kirkness E.F."/>
            <person name="Kerlavage A.R."/>
            <person name="Bult C.J."/>
            <person name="Tomb J.-F."/>
            <person name="Dougherty B.A."/>
            <person name="Merrick J.M."/>
            <person name="McKenney K."/>
            <person name="Sutton G.G."/>
            <person name="FitzHugh W."/>
            <person name="Fields C.A."/>
            <person name="Gocayne J.D."/>
            <person name="Scott J.D."/>
            <person name="Shirley R."/>
            <person name="Liu L.-I."/>
            <person name="Glodek A."/>
            <person name="Kelley J.M."/>
            <person name="Weidman J.F."/>
            <person name="Phillips C.A."/>
            <person name="Spriggs T."/>
            <person name="Hedblom E."/>
            <person name="Cotton M.D."/>
            <person name="Utterback T.R."/>
            <person name="Hanna M.C."/>
            <person name="Nguyen D.T."/>
            <person name="Saudek D.M."/>
            <person name="Brandon R.C."/>
            <person name="Fine L.D."/>
            <person name="Fritchman J.L."/>
            <person name="Fuhrmann J.L."/>
            <person name="Geoghagen N.S.M."/>
            <person name="Gnehm C.L."/>
            <person name="McDonald L.A."/>
            <person name="Small K.V."/>
            <person name="Fraser C.M."/>
            <person name="Smith H.O."/>
            <person name="Venter J.C."/>
        </authorList>
    </citation>
    <scope>NUCLEOTIDE SEQUENCE [LARGE SCALE GENOMIC DNA]</scope>
    <source>
        <strain>ATCC 51907 / DSM 11121 / KW20 / Rd</strain>
    </source>
</reference>
<organism>
    <name type="scientific">Haemophilus influenzae (strain ATCC 51907 / DSM 11121 / KW20 / Rd)</name>
    <dbReference type="NCBI Taxonomy" id="71421"/>
    <lineage>
        <taxon>Bacteria</taxon>
        <taxon>Pseudomonadati</taxon>
        <taxon>Pseudomonadota</taxon>
        <taxon>Gammaproteobacteria</taxon>
        <taxon>Pasteurellales</taxon>
        <taxon>Pasteurellaceae</taxon>
        <taxon>Haemophilus</taxon>
    </lineage>
</organism>
<name>CCMB_HAEIN</name>
<evidence type="ECO:0000250" key="1"/>
<evidence type="ECO:0000255" key="2"/>
<evidence type="ECO:0000305" key="3"/>
<accession>P45033</accession>
<proteinExistence type="inferred from homology"/>
<feature type="chain" id="PRO_0000201542" description="Heme exporter protein B">
    <location>
        <begin position="1"/>
        <end position="221"/>
    </location>
</feature>
<feature type="transmembrane region" description="Helical" evidence="2">
    <location>
        <begin position="21"/>
        <end position="41"/>
    </location>
</feature>
<feature type="transmembrane region" description="Helical" evidence="2">
    <location>
        <begin position="46"/>
        <end position="66"/>
    </location>
</feature>
<feature type="transmembrane region" description="Helical" evidence="2">
    <location>
        <begin position="101"/>
        <end position="121"/>
    </location>
</feature>
<feature type="transmembrane region" description="Helical" evidence="2">
    <location>
        <begin position="126"/>
        <end position="146"/>
    </location>
</feature>
<feature type="transmembrane region" description="Helical" evidence="2">
    <location>
        <begin position="157"/>
        <end position="177"/>
    </location>
</feature>
<feature type="transmembrane region" description="Helical" evidence="2">
    <location>
        <begin position="193"/>
        <end position="213"/>
    </location>
</feature>
<keyword id="KW-0997">Cell inner membrane</keyword>
<keyword id="KW-1003">Cell membrane</keyword>
<keyword id="KW-0201">Cytochrome c-type biogenesis</keyword>
<keyword id="KW-0472">Membrane</keyword>
<keyword id="KW-1185">Reference proteome</keyword>
<keyword id="KW-0812">Transmembrane</keyword>
<keyword id="KW-1133">Transmembrane helix</keyword>
<keyword id="KW-0813">Transport</keyword>
<protein>
    <recommendedName>
        <fullName>Heme exporter protein B</fullName>
    </recommendedName>
    <alternativeName>
        <fullName>Cytochrome c-type biogenesis protein CcmB</fullName>
    </alternativeName>
</protein>
<dbReference type="EMBL" id="L42023">
    <property type="protein sequence ID" value="AAC22747.1"/>
    <property type="molecule type" value="Genomic_DNA"/>
</dbReference>
<dbReference type="PIR" id="F64166">
    <property type="entry name" value="F64166"/>
</dbReference>
<dbReference type="RefSeq" id="NP_439247.1">
    <property type="nucleotide sequence ID" value="NC_000907.1"/>
</dbReference>
<dbReference type="SMR" id="P45033"/>
<dbReference type="STRING" id="71421.HI_1090"/>
<dbReference type="EnsemblBacteria" id="AAC22747">
    <property type="protein sequence ID" value="AAC22747"/>
    <property type="gene ID" value="HI_1090"/>
</dbReference>
<dbReference type="KEGG" id="hin:HI_1090"/>
<dbReference type="PATRIC" id="fig|71421.8.peg.1135"/>
<dbReference type="eggNOG" id="COG2386">
    <property type="taxonomic scope" value="Bacteria"/>
</dbReference>
<dbReference type="HOGENOM" id="CLU_079069_1_0_6"/>
<dbReference type="OrthoDB" id="9799895at2"/>
<dbReference type="PhylomeDB" id="P45033"/>
<dbReference type="BioCyc" id="HINF71421:G1GJ1-1125-MONOMER"/>
<dbReference type="Proteomes" id="UP000000579">
    <property type="component" value="Chromosome"/>
</dbReference>
<dbReference type="GO" id="GO:0005886">
    <property type="term" value="C:plasma membrane"/>
    <property type="evidence" value="ECO:0000318"/>
    <property type="project" value="GO_Central"/>
</dbReference>
<dbReference type="GO" id="GO:0015232">
    <property type="term" value="F:heme transmembrane transporter activity"/>
    <property type="evidence" value="ECO:0007669"/>
    <property type="project" value="InterPro"/>
</dbReference>
<dbReference type="GO" id="GO:1903607">
    <property type="term" value="P:cytochrome c biosynthetic process"/>
    <property type="evidence" value="ECO:0000318"/>
    <property type="project" value="GO_Central"/>
</dbReference>
<dbReference type="GO" id="GO:0017004">
    <property type="term" value="P:cytochrome complex assembly"/>
    <property type="evidence" value="ECO:0007669"/>
    <property type="project" value="UniProtKB-KW"/>
</dbReference>
<dbReference type="InterPro" id="IPR003544">
    <property type="entry name" value="Cyt_c_biogenesis_CcmB"/>
</dbReference>
<dbReference type="InterPro" id="IPR026031">
    <property type="entry name" value="Cyt_c_CcmB_bac"/>
</dbReference>
<dbReference type="NCBIfam" id="TIGR01190">
    <property type="entry name" value="ccmB"/>
    <property type="match status" value="1"/>
</dbReference>
<dbReference type="PANTHER" id="PTHR30070:SF1">
    <property type="entry name" value="CYTOCHROME C BIOGENESIS B-RELATED"/>
    <property type="match status" value="1"/>
</dbReference>
<dbReference type="PANTHER" id="PTHR30070">
    <property type="entry name" value="HEME EXPORTER PROTEIN B"/>
    <property type="match status" value="1"/>
</dbReference>
<dbReference type="Pfam" id="PF03379">
    <property type="entry name" value="CcmB"/>
    <property type="match status" value="1"/>
</dbReference>
<dbReference type="PIRSF" id="PIRSF002764">
    <property type="entry name" value="CcmB"/>
    <property type="match status" value="1"/>
</dbReference>
<dbReference type="PRINTS" id="PR01414">
    <property type="entry name" value="CCMBBIOGNSIS"/>
</dbReference>
<gene>
    <name type="primary">ccmB</name>
    <name type="ordered locus">HI_1090</name>
</gene>